<proteinExistence type="evidence at transcript level"/>
<comment type="function">
    <text evidence="2 5">Thiol-specific peroxidase that catalyzes the reduction of hydrogen peroxide and organic hydroperoxides to water and alcohols, respectively. Plays a role in cell protection against oxidative stress by detoxifying peroxides (By similarity). Involved in both resistance against fungal disease and oxidative stress (PubMed:15840643).</text>
</comment>
<comment type="catalytic activity">
    <reaction evidence="2">
        <text>a hydroperoxide + [thioredoxin]-dithiol = an alcohol + [thioredoxin]-disulfide + H2O</text>
        <dbReference type="Rhea" id="RHEA:62620"/>
        <dbReference type="Rhea" id="RHEA-COMP:10698"/>
        <dbReference type="Rhea" id="RHEA-COMP:10700"/>
        <dbReference type="ChEBI" id="CHEBI:15377"/>
        <dbReference type="ChEBI" id="CHEBI:29950"/>
        <dbReference type="ChEBI" id="CHEBI:30879"/>
        <dbReference type="ChEBI" id="CHEBI:35924"/>
        <dbReference type="ChEBI" id="CHEBI:50058"/>
        <dbReference type="EC" id="1.11.1.24"/>
    </reaction>
</comment>
<comment type="subunit">
    <text evidence="2">Monomer.</text>
</comment>
<comment type="subcellular location">
    <subcellularLocation>
        <location evidence="2">Plastid</location>
        <location evidence="2">Chloroplast thylakoid lumen</location>
    </subcellularLocation>
</comment>
<comment type="tissue specificity">
    <text evidence="5">Expressed in the leaves, roots and stems.</text>
</comment>
<comment type="induction">
    <text evidence="5">By salicylic acid (SA).</text>
</comment>
<comment type="miscellaneous">
    <text evidence="1">The active site is a conserved redox-active cysteine residue, the peroxidatic cysteine (C(P)), which makes the nucleophilic attack on the peroxide substrate. The peroxide oxidizes the C(P)-SH to cysteine sulfenic acid (C(P)-SOH), which then reacts with another cysteine residue, the resolving cysteine (C(R)), to form a disulfide bridge. The disulfide is subsequently reduced by an appropriate electron donor to complete the catalytic cycle. In this atypical 2-Cys peroxiredoxin, C(R) is present in the same subunit to form an intramolecular disulfide. The disulfide is subsequently reduced by thioredoxin.</text>
</comment>
<comment type="similarity">
    <text evidence="6">Belongs to the peroxiredoxin family. BCP/PrxQ subfamily.</text>
</comment>
<gene>
    <name type="primary">AFP1</name>
</gene>
<evidence type="ECO:0000250" key="1">
    <source>
        <dbReference type="UniProtKB" id="P0AE52"/>
    </source>
</evidence>
<evidence type="ECO:0000250" key="2">
    <source>
        <dbReference type="UniProtKB" id="Q9LU86"/>
    </source>
</evidence>
<evidence type="ECO:0000255" key="3"/>
<evidence type="ECO:0000255" key="4">
    <source>
        <dbReference type="PROSITE-ProRule" id="PRU00691"/>
    </source>
</evidence>
<evidence type="ECO:0000269" key="5">
    <source>
    </source>
</evidence>
<evidence type="ECO:0000305" key="6"/>
<feature type="transit peptide" description="Chloroplast" evidence="3">
    <location>
        <begin position="1"/>
        <end position="65"/>
    </location>
</feature>
<feature type="chain" id="PRO_0000285110" description="Peroxiredoxin Q, chloroplastic">
    <location>
        <begin position="66"/>
        <end position="217"/>
    </location>
</feature>
<feature type="domain" description="Thioredoxin" evidence="4">
    <location>
        <begin position="70"/>
        <end position="217"/>
    </location>
</feature>
<feature type="active site" description="Cysteine sulfenic acid (-SOH) intermediate" evidence="1">
    <location>
        <position position="112"/>
    </location>
</feature>
<feature type="disulfide bond" description="Redox-active" evidence="1">
    <location>
        <begin position="112"/>
        <end position="117"/>
    </location>
</feature>
<reference key="1">
    <citation type="journal article" date="2005" name="Plant Cell Physiol.">
        <title>A peroxiredoxin Q homolog from gentians is involved in both resistance against fungal disease and oxidative stress.</title>
        <authorList>
            <person name="Kiba A."/>
            <person name="Nishihara M."/>
            <person name="Tsukatani N."/>
            <person name="Nakatsuka T."/>
            <person name="Kato Y."/>
            <person name="Yamamura S."/>
        </authorList>
    </citation>
    <scope>NUCLEOTIDE SEQUENCE [MRNA]</scope>
    <scope>TISSUE SPECIFICITY</scope>
    <scope>INDUCTION</scope>
</reference>
<keyword id="KW-0049">Antioxidant</keyword>
<keyword id="KW-0150">Chloroplast</keyword>
<keyword id="KW-1015">Disulfide bond</keyword>
<keyword id="KW-0560">Oxidoreductase</keyword>
<keyword id="KW-0575">Peroxidase</keyword>
<keyword id="KW-0934">Plastid</keyword>
<keyword id="KW-0676">Redox-active center</keyword>
<keyword id="KW-0793">Thylakoid</keyword>
<keyword id="KW-0809">Transit peptide</keyword>
<name>PRXQ_GENTR</name>
<accession>Q75SY5</accession>
<protein>
    <recommendedName>
        <fullName>Peroxiredoxin Q, chloroplastic</fullName>
        <ecNumber evidence="2">1.11.1.24</ecNumber>
    </recommendedName>
    <alternativeName>
        <fullName>Thioredoxin peroxidase</fullName>
    </alternativeName>
    <alternativeName>
        <fullName evidence="6">Thioredoxin-dependent peroxiredoxin Q</fullName>
    </alternativeName>
</protein>
<sequence>MAAICLPVAKHSFPSLLNTQTPKPLFSQNLHTIPLSSQSQICGLKFLISSPSSLPPPPSYSARISVFAKVSKGSVPPQFTLKDQDGKNVSLTEFKGKPVVVYFYPADETPGCTKQACAFRDSYEKFKKAGAEVIGISGDDPSSHKAFAKKYRLPYTLLSDEGNKIRREWGVPADLFGTLPGRQTYVLDKNGTVQLIYNNQFQPEKHIDETLKFLQSA</sequence>
<organism>
    <name type="scientific">Gentiana triflora</name>
    <name type="common">Clustered gentian</name>
    <dbReference type="NCBI Taxonomy" id="55190"/>
    <lineage>
        <taxon>Eukaryota</taxon>
        <taxon>Viridiplantae</taxon>
        <taxon>Streptophyta</taxon>
        <taxon>Embryophyta</taxon>
        <taxon>Tracheophyta</taxon>
        <taxon>Spermatophyta</taxon>
        <taxon>Magnoliopsida</taxon>
        <taxon>eudicotyledons</taxon>
        <taxon>Gunneridae</taxon>
        <taxon>Pentapetalae</taxon>
        <taxon>asterids</taxon>
        <taxon>lamiids</taxon>
        <taxon>Gentianales</taxon>
        <taxon>Gentianaceae</taxon>
        <taxon>Gentianeae</taxon>
        <taxon>Gentianinae</taxon>
        <taxon>Gentiana</taxon>
    </lineage>
</organism>
<dbReference type="EC" id="1.11.1.24" evidence="2"/>
<dbReference type="EMBL" id="AB128915">
    <property type="protein sequence ID" value="BAD04985.1"/>
    <property type="molecule type" value="mRNA"/>
</dbReference>
<dbReference type="SMR" id="Q75SY5"/>
<dbReference type="PeroxiBase" id="4305">
    <property type="entry name" value="GtrPrxQ"/>
</dbReference>
<dbReference type="GO" id="GO:0009543">
    <property type="term" value="C:chloroplast thylakoid lumen"/>
    <property type="evidence" value="ECO:0007669"/>
    <property type="project" value="UniProtKB-SubCell"/>
</dbReference>
<dbReference type="GO" id="GO:0009535">
    <property type="term" value="C:chloroplast thylakoid membrane"/>
    <property type="evidence" value="ECO:0007669"/>
    <property type="project" value="TreeGrafter"/>
</dbReference>
<dbReference type="GO" id="GO:0008379">
    <property type="term" value="F:thioredoxin peroxidase activity"/>
    <property type="evidence" value="ECO:0007669"/>
    <property type="project" value="TreeGrafter"/>
</dbReference>
<dbReference type="GO" id="GO:0045454">
    <property type="term" value="P:cell redox homeostasis"/>
    <property type="evidence" value="ECO:0007669"/>
    <property type="project" value="TreeGrafter"/>
</dbReference>
<dbReference type="GO" id="GO:0034599">
    <property type="term" value="P:cellular response to oxidative stress"/>
    <property type="evidence" value="ECO:0007669"/>
    <property type="project" value="TreeGrafter"/>
</dbReference>
<dbReference type="CDD" id="cd03017">
    <property type="entry name" value="PRX_BCP"/>
    <property type="match status" value="1"/>
</dbReference>
<dbReference type="FunFam" id="3.40.30.10:FF:000122">
    <property type="entry name" value="Peroxiredoxin Q chloroplastic"/>
    <property type="match status" value="1"/>
</dbReference>
<dbReference type="Gene3D" id="3.40.30.10">
    <property type="entry name" value="Glutaredoxin"/>
    <property type="match status" value="1"/>
</dbReference>
<dbReference type="InterPro" id="IPR000866">
    <property type="entry name" value="AhpC/TSA"/>
</dbReference>
<dbReference type="InterPro" id="IPR050924">
    <property type="entry name" value="Peroxiredoxin_BCP/PrxQ"/>
</dbReference>
<dbReference type="InterPro" id="IPR036249">
    <property type="entry name" value="Thioredoxin-like_sf"/>
</dbReference>
<dbReference type="InterPro" id="IPR013766">
    <property type="entry name" value="Thioredoxin_domain"/>
</dbReference>
<dbReference type="PANTHER" id="PTHR42801:SF4">
    <property type="entry name" value="AHPC_TSA FAMILY PROTEIN"/>
    <property type="match status" value="1"/>
</dbReference>
<dbReference type="PANTHER" id="PTHR42801">
    <property type="entry name" value="THIOREDOXIN-DEPENDENT PEROXIDE REDUCTASE"/>
    <property type="match status" value="1"/>
</dbReference>
<dbReference type="Pfam" id="PF00578">
    <property type="entry name" value="AhpC-TSA"/>
    <property type="match status" value="1"/>
</dbReference>
<dbReference type="SUPFAM" id="SSF52833">
    <property type="entry name" value="Thioredoxin-like"/>
    <property type="match status" value="1"/>
</dbReference>
<dbReference type="PROSITE" id="PS51352">
    <property type="entry name" value="THIOREDOXIN_2"/>
    <property type="match status" value="1"/>
</dbReference>